<feature type="chain" id="PRO_1000066968" description="Glucosamine-6-phosphate deaminase">
    <location>
        <begin position="1"/>
        <end position="244"/>
    </location>
</feature>
<feature type="active site" description="Proton acceptor; for enolization step" evidence="1">
    <location>
        <position position="67"/>
    </location>
</feature>
<feature type="active site" description="For ring-opening step" evidence="1">
    <location>
        <position position="136"/>
    </location>
</feature>
<feature type="active site" description="Proton acceptor; for ring-opening step" evidence="1">
    <location>
        <position position="138"/>
    </location>
</feature>
<feature type="active site" description="For ring-opening step" evidence="1">
    <location>
        <position position="143"/>
    </location>
</feature>
<name>NAGB_CLOBH</name>
<comment type="function">
    <text evidence="1">Catalyzes the reversible isomerization-deamination of glucosamine 6-phosphate (GlcN6P) to form fructose 6-phosphate (Fru6P) and ammonium ion.</text>
</comment>
<comment type="catalytic activity">
    <reaction evidence="1">
        <text>alpha-D-glucosamine 6-phosphate + H2O = beta-D-fructose 6-phosphate + NH4(+)</text>
        <dbReference type="Rhea" id="RHEA:12172"/>
        <dbReference type="ChEBI" id="CHEBI:15377"/>
        <dbReference type="ChEBI" id="CHEBI:28938"/>
        <dbReference type="ChEBI" id="CHEBI:57634"/>
        <dbReference type="ChEBI" id="CHEBI:75989"/>
        <dbReference type="EC" id="3.5.99.6"/>
    </reaction>
</comment>
<comment type="pathway">
    <text evidence="1">Amino-sugar metabolism; N-acetylneuraminate degradation; D-fructose 6-phosphate from N-acetylneuraminate: step 5/5.</text>
</comment>
<comment type="similarity">
    <text evidence="1">Belongs to the glucosamine/galactosamine-6-phosphate isomerase family. NagB subfamily.</text>
</comment>
<keyword id="KW-0119">Carbohydrate metabolism</keyword>
<keyword id="KW-0378">Hydrolase</keyword>
<keyword id="KW-1185">Reference proteome</keyword>
<reference key="1">
    <citation type="journal article" date="2007" name="Genome Res.">
        <title>Genome sequence of a proteolytic (Group I) Clostridium botulinum strain Hall A and comparative analysis of the clostridial genomes.</title>
        <authorList>
            <person name="Sebaihia M."/>
            <person name="Peck M.W."/>
            <person name="Minton N.P."/>
            <person name="Thomson N.R."/>
            <person name="Holden M.T.G."/>
            <person name="Mitchell W.J."/>
            <person name="Carter A.T."/>
            <person name="Bentley S.D."/>
            <person name="Mason D.R."/>
            <person name="Crossman L."/>
            <person name="Paul C.J."/>
            <person name="Ivens A."/>
            <person name="Wells-Bennik M.H.J."/>
            <person name="Davis I.J."/>
            <person name="Cerdeno-Tarraga A.M."/>
            <person name="Churcher C."/>
            <person name="Quail M.A."/>
            <person name="Chillingworth T."/>
            <person name="Feltwell T."/>
            <person name="Fraser A."/>
            <person name="Goodhead I."/>
            <person name="Hance Z."/>
            <person name="Jagels K."/>
            <person name="Larke N."/>
            <person name="Maddison M."/>
            <person name="Moule S."/>
            <person name="Mungall K."/>
            <person name="Norbertczak H."/>
            <person name="Rabbinowitsch E."/>
            <person name="Sanders M."/>
            <person name="Simmonds M."/>
            <person name="White B."/>
            <person name="Whithead S."/>
            <person name="Parkhill J."/>
        </authorList>
    </citation>
    <scope>NUCLEOTIDE SEQUENCE [LARGE SCALE GENOMIC DNA]</scope>
    <source>
        <strain>Hall / ATCC 3502 / NCTC 13319 / Type A</strain>
    </source>
</reference>
<reference key="2">
    <citation type="journal article" date="2007" name="PLoS ONE">
        <title>Analysis of the neurotoxin complex genes in Clostridium botulinum A1-A4 and B1 strains: BoNT/A3, /Ba4 and /B1 clusters are located within plasmids.</title>
        <authorList>
            <person name="Smith T.J."/>
            <person name="Hill K.K."/>
            <person name="Foley B.T."/>
            <person name="Detter J.C."/>
            <person name="Munk A.C."/>
            <person name="Bruce D.C."/>
            <person name="Doggett N.A."/>
            <person name="Smith L.A."/>
            <person name="Marks J.D."/>
            <person name="Xie G."/>
            <person name="Brettin T.S."/>
        </authorList>
    </citation>
    <scope>NUCLEOTIDE SEQUENCE [LARGE SCALE GENOMIC DNA]</scope>
    <source>
        <strain>Hall / ATCC 3502 / NCTC 13319 / Type A</strain>
    </source>
</reference>
<proteinExistence type="inferred from homology"/>
<dbReference type="EC" id="3.5.99.6" evidence="1"/>
<dbReference type="EMBL" id="CP000727">
    <property type="protein sequence ID" value="ABS36052.1"/>
    <property type="molecule type" value="Genomic_DNA"/>
</dbReference>
<dbReference type="EMBL" id="AM412317">
    <property type="protein sequence ID" value="CAL84397.1"/>
    <property type="molecule type" value="Genomic_DNA"/>
</dbReference>
<dbReference type="RefSeq" id="WP_011987104.1">
    <property type="nucleotide sequence ID" value="NC_009698.1"/>
</dbReference>
<dbReference type="RefSeq" id="YP_001255333.1">
    <property type="nucleotide sequence ID" value="NC_009495.1"/>
</dbReference>
<dbReference type="RefSeq" id="YP_001388546.1">
    <property type="nucleotide sequence ID" value="NC_009698.1"/>
</dbReference>
<dbReference type="SMR" id="A5I5R9"/>
<dbReference type="GeneID" id="5187663"/>
<dbReference type="KEGG" id="cbh:CLC_2710"/>
<dbReference type="KEGG" id="cbo:CBO2833"/>
<dbReference type="PATRIC" id="fig|413999.7.peg.2819"/>
<dbReference type="HOGENOM" id="CLU_049611_1_1_9"/>
<dbReference type="UniPathway" id="UPA00629">
    <property type="reaction ID" value="UER00684"/>
</dbReference>
<dbReference type="PRO" id="PR:A5I5R9"/>
<dbReference type="Proteomes" id="UP000001986">
    <property type="component" value="Chromosome"/>
</dbReference>
<dbReference type="GO" id="GO:0005737">
    <property type="term" value="C:cytoplasm"/>
    <property type="evidence" value="ECO:0000318"/>
    <property type="project" value="GO_Central"/>
</dbReference>
<dbReference type="GO" id="GO:0004342">
    <property type="term" value="F:glucosamine-6-phosphate deaminase activity"/>
    <property type="evidence" value="ECO:0000318"/>
    <property type="project" value="GO_Central"/>
</dbReference>
<dbReference type="GO" id="GO:0042802">
    <property type="term" value="F:identical protein binding"/>
    <property type="evidence" value="ECO:0000318"/>
    <property type="project" value="GO_Central"/>
</dbReference>
<dbReference type="GO" id="GO:0005975">
    <property type="term" value="P:carbohydrate metabolic process"/>
    <property type="evidence" value="ECO:0007669"/>
    <property type="project" value="InterPro"/>
</dbReference>
<dbReference type="GO" id="GO:0006043">
    <property type="term" value="P:glucosamine catabolic process"/>
    <property type="evidence" value="ECO:0000318"/>
    <property type="project" value="GO_Central"/>
</dbReference>
<dbReference type="GO" id="GO:0006046">
    <property type="term" value="P:N-acetylglucosamine catabolic process"/>
    <property type="evidence" value="ECO:0000318"/>
    <property type="project" value="GO_Central"/>
</dbReference>
<dbReference type="GO" id="GO:0019262">
    <property type="term" value="P:N-acetylneuraminate catabolic process"/>
    <property type="evidence" value="ECO:0000318"/>
    <property type="project" value="GO_Central"/>
</dbReference>
<dbReference type="CDD" id="cd01399">
    <property type="entry name" value="GlcN6P_deaminase"/>
    <property type="match status" value="1"/>
</dbReference>
<dbReference type="FunFam" id="3.40.50.1360:FF:000003">
    <property type="entry name" value="Glucosamine-6-phosphate deaminase"/>
    <property type="match status" value="1"/>
</dbReference>
<dbReference type="Gene3D" id="3.40.50.1360">
    <property type="match status" value="1"/>
</dbReference>
<dbReference type="HAMAP" id="MF_01241">
    <property type="entry name" value="GlcN6P_deamin"/>
    <property type="match status" value="1"/>
</dbReference>
<dbReference type="InterPro" id="IPR006148">
    <property type="entry name" value="Glc/Gal-6P_isomerase"/>
</dbReference>
<dbReference type="InterPro" id="IPR004547">
    <property type="entry name" value="Glucosamine6P_isomerase"/>
</dbReference>
<dbReference type="InterPro" id="IPR018321">
    <property type="entry name" value="Glucosamine6P_isomerase_CS"/>
</dbReference>
<dbReference type="InterPro" id="IPR037171">
    <property type="entry name" value="NagB/RpiA_transferase-like"/>
</dbReference>
<dbReference type="NCBIfam" id="TIGR00502">
    <property type="entry name" value="nagB"/>
    <property type="match status" value="1"/>
</dbReference>
<dbReference type="NCBIfam" id="NF001684">
    <property type="entry name" value="PRK00443.1-4"/>
    <property type="match status" value="1"/>
</dbReference>
<dbReference type="PANTHER" id="PTHR11280">
    <property type="entry name" value="GLUCOSAMINE-6-PHOSPHATE ISOMERASE"/>
    <property type="match status" value="1"/>
</dbReference>
<dbReference type="PANTHER" id="PTHR11280:SF5">
    <property type="entry name" value="GLUCOSAMINE-6-PHOSPHATE ISOMERASE"/>
    <property type="match status" value="1"/>
</dbReference>
<dbReference type="Pfam" id="PF01182">
    <property type="entry name" value="Glucosamine_iso"/>
    <property type="match status" value="1"/>
</dbReference>
<dbReference type="SUPFAM" id="SSF100950">
    <property type="entry name" value="NagB/RpiA/CoA transferase-like"/>
    <property type="match status" value="1"/>
</dbReference>
<dbReference type="PROSITE" id="PS01161">
    <property type="entry name" value="GLC_GALNAC_ISOMERASE"/>
    <property type="match status" value="1"/>
</dbReference>
<sequence length="244" mass="27286">MRIIVVDNYEEMSKKAAAMVASQVILKPDSVLGLATGDTPIGMYKEIINIYKNQKMDFSKARTFNLDEYYGLNRENPQSYYYYMMNNLFNHVNIDKNNINIPNGMADNIEIECKEYERKIDKAGGIDLQILGIGVNGHIGFNEPNISFESETHLVNLNEKTIESNSRFFSSKEEVPTKAISVGIKSIIHSKKIILLACGSAKSDAVSKTINGKINPNIPASILQLHRDVVVIIDKEAASKLNLK</sequence>
<organism>
    <name type="scientific">Clostridium botulinum (strain Hall / ATCC 3502 / NCTC 13319 / Type A)</name>
    <dbReference type="NCBI Taxonomy" id="441771"/>
    <lineage>
        <taxon>Bacteria</taxon>
        <taxon>Bacillati</taxon>
        <taxon>Bacillota</taxon>
        <taxon>Clostridia</taxon>
        <taxon>Eubacteriales</taxon>
        <taxon>Clostridiaceae</taxon>
        <taxon>Clostridium</taxon>
    </lineage>
</organism>
<accession>A5I5R9</accession>
<accession>A7G6Y1</accession>
<protein>
    <recommendedName>
        <fullName evidence="1">Glucosamine-6-phosphate deaminase</fullName>
        <ecNumber evidence="1">3.5.99.6</ecNumber>
    </recommendedName>
    <alternativeName>
        <fullName evidence="1">GlcN6P deaminase</fullName>
        <shortName evidence="1">GNPDA</shortName>
    </alternativeName>
    <alternativeName>
        <fullName evidence="1">Glucosamine-6-phosphate isomerase</fullName>
    </alternativeName>
</protein>
<gene>
    <name evidence="1" type="primary">nagB</name>
    <name type="ordered locus">CBO2833</name>
    <name type="ordered locus">CLC_2710</name>
</gene>
<evidence type="ECO:0000255" key="1">
    <source>
        <dbReference type="HAMAP-Rule" id="MF_01241"/>
    </source>
</evidence>